<protein>
    <recommendedName>
        <fullName evidence="1">Lipoyl synthase, mitochondrial</fullName>
        <ecNumber evidence="1">2.8.1.8</ecNumber>
    </recommendedName>
    <alternativeName>
        <fullName evidence="1">Lipoate synthase</fullName>
        <shortName evidence="1">LS</shortName>
        <shortName evidence="1">Lip-syn</shortName>
    </alternativeName>
    <alternativeName>
        <fullName evidence="1">Lipoic acid synthase</fullName>
    </alternativeName>
</protein>
<dbReference type="EC" id="2.8.1.8" evidence="1"/>
<dbReference type="EMBL" id="DS231875">
    <property type="protein sequence ID" value="EDS41812.1"/>
    <property type="molecule type" value="Genomic_DNA"/>
</dbReference>
<dbReference type="RefSeq" id="XP_001845830.1">
    <property type="nucleotide sequence ID" value="XM_001845778.1"/>
</dbReference>
<dbReference type="SMR" id="B0WAU6"/>
<dbReference type="FunCoup" id="B0WAU6">
    <property type="interactions" value="1778"/>
</dbReference>
<dbReference type="STRING" id="7176.B0WAU6"/>
<dbReference type="EnsemblMetazoa" id="CPIJ004250-RA">
    <property type="protein sequence ID" value="CPIJ004250-PA"/>
    <property type="gene ID" value="CPIJ004250"/>
</dbReference>
<dbReference type="EnsemblMetazoa" id="CQUJHB005033.R7757">
    <property type="protein sequence ID" value="CQUJHB005033.P7757"/>
    <property type="gene ID" value="CQUJHB005033"/>
</dbReference>
<dbReference type="EnsemblMetazoa" id="XM_038253914.1">
    <property type="protein sequence ID" value="XP_038109842.1"/>
    <property type="gene ID" value="LOC6035696"/>
</dbReference>
<dbReference type="KEGG" id="cqu:CpipJ_CPIJ004250"/>
<dbReference type="VEuPathDB" id="VectorBase:CPIJ004250"/>
<dbReference type="VEuPathDB" id="VectorBase:CQUJHB005033"/>
<dbReference type="eggNOG" id="KOG2672">
    <property type="taxonomic scope" value="Eukaryota"/>
</dbReference>
<dbReference type="HOGENOM" id="CLU_033144_2_1_1"/>
<dbReference type="InParanoid" id="B0WAU6"/>
<dbReference type="OMA" id="PYCDIDF"/>
<dbReference type="OrthoDB" id="3231at2759"/>
<dbReference type="PhylomeDB" id="B0WAU6"/>
<dbReference type="UniPathway" id="UPA00538">
    <property type="reaction ID" value="UER00593"/>
</dbReference>
<dbReference type="Proteomes" id="UP000002320">
    <property type="component" value="Unassembled WGS sequence"/>
</dbReference>
<dbReference type="GO" id="GO:0005739">
    <property type="term" value="C:mitochondrion"/>
    <property type="evidence" value="ECO:0007669"/>
    <property type="project" value="UniProtKB-SubCell"/>
</dbReference>
<dbReference type="GO" id="GO:0051539">
    <property type="term" value="F:4 iron, 4 sulfur cluster binding"/>
    <property type="evidence" value="ECO:0007669"/>
    <property type="project" value="UniProtKB-UniRule"/>
</dbReference>
<dbReference type="GO" id="GO:0016992">
    <property type="term" value="F:lipoate synthase activity"/>
    <property type="evidence" value="ECO:0007669"/>
    <property type="project" value="UniProtKB-UniRule"/>
</dbReference>
<dbReference type="GO" id="GO:0046872">
    <property type="term" value="F:metal ion binding"/>
    <property type="evidence" value="ECO:0007669"/>
    <property type="project" value="UniProtKB-KW"/>
</dbReference>
<dbReference type="CDD" id="cd01335">
    <property type="entry name" value="Radical_SAM"/>
    <property type="match status" value="1"/>
</dbReference>
<dbReference type="FunFam" id="3.20.20.70:FF:000036">
    <property type="entry name" value="Lipoyl synthase, mitochondrial"/>
    <property type="match status" value="1"/>
</dbReference>
<dbReference type="Gene3D" id="3.20.20.70">
    <property type="entry name" value="Aldolase class I"/>
    <property type="match status" value="1"/>
</dbReference>
<dbReference type="HAMAP" id="MF_00206">
    <property type="entry name" value="Lipoyl_synth"/>
    <property type="match status" value="1"/>
</dbReference>
<dbReference type="InterPro" id="IPR013785">
    <property type="entry name" value="Aldolase_TIM"/>
</dbReference>
<dbReference type="InterPro" id="IPR006638">
    <property type="entry name" value="Elp3/MiaA/NifB-like_rSAM"/>
</dbReference>
<dbReference type="InterPro" id="IPR031691">
    <property type="entry name" value="LIAS_N"/>
</dbReference>
<dbReference type="InterPro" id="IPR003698">
    <property type="entry name" value="Lipoyl_synth"/>
</dbReference>
<dbReference type="InterPro" id="IPR007197">
    <property type="entry name" value="rSAM"/>
</dbReference>
<dbReference type="NCBIfam" id="TIGR00510">
    <property type="entry name" value="lipA"/>
    <property type="match status" value="1"/>
</dbReference>
<dbReference type="NCBIfam" id="NF004019">
    <property type="entry name" value="PRK05481.1"/>
    <property type="match status" value="1"/>
</dbReference>
<dbReference type="NCBIfam" id="NF009544">
    <property type="entry name" value="PRK12928.1"/>
    <property type="match status" value="1"/>
</dbReference>
<dbReference type="PANTHER" id="PTHR10949">
    <property type="entry name" value="LIPOYL SYNTHASE"/>
    <property type="match status" value="1"/>
</dbReference>
<dbReference type="PANTHER" id="PTHR10949:SF0">
    <property type="entry name" value="LIPOYL SYNTHASE, MITOCHONDRIAL"/>
    <property type="match status" value="1"/>
</dbReference>
<dbReference type="Pfam" id="PF16881">
    <property type="entry name" value="LIAS_N"/>
    <property type="match status" value="1"/>
</dbReference>
<dbReference type="Pfam" id="PF04055">
    <property type="entry name" value="Radical_SAM"/>
    <property type="match status" value="1"/>
</dbReference>
<dbReference type="PIRSF" id="PIRSF005963">
    <property type="entry name" value="Lipoyl_synth"/>
    <property type="match status" value="1"/>
</dbReference>
<dbReference type="SFLD" id="SFLDF00271">
    <property type="entry name" value="lipoyl_synthase"/>
    <property type="match status" value="1"/>
</dbReference>
<dbReference type="SFLD" id="SFLDG01058">
    <property type="entry name" value="lipoyl_synthase_like"/>
    <property type="match status" value="1"/>
</dbReference>
<dbReference type="SMART" id="SM00729">
    <property type="entry name" value="Elp3"/>
    <property type="match status" value="1"/>
</dbReference>
<dbReference type="SUPFAM" id="SSF102114">
    <property type="entry name" value="Radical SAM enzymes"/>
    <property type="match status" value="1"/>
</dbReference>
<dbReference type="PROSITE" id="PS51918">
    <property type="entry name" value="RADICAL_SAM"/>
    <property type="match status" value="1"/>
</dbReference>
<keyword id="KW-0004">4Fe-4S</keyword>
<keyword id="KW-0408">Iron</keyword>
<keyword id="KW-0411">Iron-sulfur</keyword>
<keyword id="KW-0479">Metal-binding</keyword>
<keyword id="KW-0496">Mitochondrion</keyword>
<keyword id="KW-1185">Reference proteome</keyword>
<keyword id="KW-0949">S-adenosyl-L-methionine</keyword>
<keyword id="KW-0808">Transferase</keyword>
<proteinExistence type="inferred from homology"/>
<organism>
    <name type="scientific">Culex quinquefasciatus</name>
    <name type="common">Southern house mosquito</name>
    <name type="synonym">Culex pungens</name>
    <dbReference type="NCBI Taxonomy" id="7176"/>
    <lineage>
        <taxon>Eukaryota</taxon>
        <taxon>Metazoa</taxon>
        <taxon>Ecdysozoa</taxon>
        <taxon>Arthropoda</taxon>
        <taxon>Hexapoda</taxon>
        <taxon>Insecta</taxon>
        <taxon>Pterygota</taxon>
        <taxon>Neoptera</taxon>
        <taxon>Endopterygota</taxon>
        <taxon>Diptera</taxon>
        <taxon>Nematocera</taxon>
        <taxon>Culicoidea</taxon>
        <taxon>Culicidae</taxon>
        <taxon>Culicinae</taxon>
        <taxon>Culicini</taxon>
        <taxon>Culex</taxon>
        <taxon>Culex</taxon>
    </lineage>
</organism>
<gene>
    <name type="ORF">CPIJ004250</name>
</gene>
<name>LIAS_CULQU</name>
<feature type="chain" id="PRO_0000398215" description="Lipoyl synthase, mitochondrial">
    <location>
        <begin position="1"/>
        <end position="380"/>
    </location>
</feature>
<feature type="domain" description="Radical SAM core" evidence="2">
    <location>
        <begin position="120"/>
        <end position="339"/>
    </location>
</feature>
<feature type="binding site" evidence="1">
    <location>
        <position position="104"/>
    </location>
    <ligand>
        <name>[4Fe-4S] cluster</name>
        <dbReference type="ChEBI" id="CHEBI:49883"/>
        <label>1</label>
    </ligand>
</feature>
<feature type="binding site" evidence="1">
    <location>
        <position position="109"/>
    </location>
    <ligand>
        <name>[4Fe-4S] cluster</name>
        <dbReference type="ChEBI" id="CHEBI:49883"/>
        <label>1</label>
    </ligand>
</feature>
<feature type="binding site" evidence="1">
    <location>
        <position position="115"/>
    </location>
    <ligand>
        <name>[4Fe-4S] cluster</name>
        <dbReference type="ChEBI" id="CHEBI:49883"/>
        <label>1</label>
    </ligand>
</feature>
<feature type="binding site" evidence="1">
    <location>
        <position position="135"/>
    </location>
    <ligand>
        <name>[4Fe-4S] cluster</name>
        <dbReference type="ChEBI" id="CHEBI:49883"/>
        <label>2</label>
        <note>4Fe-4S-S-AdoMet</note>
    </ligand>
</feature>
<feature type="binding site" evidence="1">
    <location>
        <position position="139"/>
    </location>
    <ligand>
        <name>[4Fe-4S] cluster</name>
        <dbReference type="ChEBI" id="CHEBI:49883"/>
        <label>2</label>
        <note>4Fe-4S-S-AdoMet</note>
    </ligand>
</feature>
<feature type="binding site" evidence="1">
    <location>
        <position position="142"/>
    </location>
    <ligand>
        <name>[4Fe-4S] cluster</name>
        <dbReference type="ChEBI" id="CHEBI:49883"/>
        <label>2</label>
        <note>4Fe-4S-S-AdoMet</note>
    </ligand>
</feature>
<feature type="binding site" evidence="1">
    <location>
        <position position="350"/>
    </location>
    <ligand>
        <name>[4Fe-4S] cluster</name>
        <dbReference type="ChEBI" id="CHEBI:49883"/>
        <label>1</label>
    </ligand>
</feature>
<evidence type="ECO:0000255" key="1">
    <source>
        <dbReference type="HAMAP-Rule" id="MF_03123"/>
    </source>
</evidence>
<evidence type="ECO:0000255" key="2">
    <source>
        <dbReference type="PROSITE-ProRule" id="PRU01266"/>
    </source>
</evidence>
<accession>B0WAU6</accession>
<reference key="1">
    <citation type="submission" date="2007-03" db="EMBL/GenBank/DDBJ databases">
        <title>Annotation of Culex pipiens quinquefasciatus.</title>
        <authorList>
            <consortium name="The Broad Institute Genome Sequencing Platform"/>
            <person name="Atkinson P.W."/>
            <person name="Hemingway J."/>
            <person name="Christensen B.M."/>
            <person name="Higgs S."/>
            <person name="Kodira C.D."/>
            <person name="Hannick L.I."/>
            <person name="Megy K."/>
            <person name="O'Leary S.B."/>
            <person name="Pearson M."/>
            <person name="Haas B.J."/>
            <person name="Mauceli E."/>
            <person name="Wortman J.R."/>
            <person name="Lee N.H."/>
            <person name="Guigo R."/>
            <person name="Stanke M."/>
            <person name="Alvarado L."/>
            <person name="Amedeo P."/>
            <person name="Antoine C.H."/>
            <person name="Arensburger P."/>
            <person name="Bidwell S.L."/>
            <person name="Crawford M."/>
            <person name="Camaro F."/>
            <person name="Devon K."/>
            <person name="Engels R."/>
            <person name="Hammond M."/>
            <person name="Howarth C."/>
            <person name="Koehrsen M."/>
            <person name="Lawson D."/>
            <person name="Montgomery P."/>
            <person name="Nene V."/>
            <person name="Nusbaum C."/>
            <person name="Puiu D."/>
            <person name="Romero-Severson J."/>
            <person name="Severson D.W."/>
            <person name="Shumway M."/>
            <person name="Sisk P."/>
            <person name="Stolte C."/>
            <person name="Zeng Q."/>
            <person name="Eisenstadt E."/>
            <person name="Fraser-Liggett C.M."/>
            <person name="Strausberg R."/>
            <person name="Galagan J."/>
            <person name="Birren B."/>
            <person name="Collins F.H."/>
        </authorList>
    </citation>
    <scope>NUCLEOTIDE SEQUENCE [LARGE SCALE GENOMIC DNA]</scope>
    <source>
        <strain>JHB</strain>
    </source>
</reference>
<sequence length="380" mass="42657">MKYFFSLPFPKVHTTCKHTAAATASQPLQKIRERLESGPGFQEFVQNPSYNREDWSAYEGKLKREKGEQDRLRLPPWLKTKIPMGKNFSRIKDQLRELKLATVCEEAKCPNIGECWGGGEHGTQTATIMLMGDTCTRGCRFCSVKTARAPPPLDPDEPKKTASAIASWGLDYIVLTSVDRDDLPDGGSNHIAETIREIKRQNPRIFVECLAPDFRGNLDCIRTVATSGLDVYAHNIETVESLTPFVRDRRAEYRQSLKCLASVKEINPNMVTKTSIMLGLGETDEQVEQTMKDLRAVGVDCLTLGQYMQPTKRHLKVIEYVTPEKFKHWETRGNELGFLYTASGPLVRSSYKAGEFFITSILKNRAAAAAEEATATKPSE</sequence>
<comment type="function">
    <text evidence="1">Catalyzes the radical-mediated insertion of two sulfur atoms into the C-6 and C-8 positions of the octanoyl moiety bound to the lipoyl domains of lipoate-dependent enzymes, thereby converting the octanoylated domains into lipoylated derivatives.</text>
</comment>
<comment type="catalytic activity">
    <reaction evidence="1">
        <text>[[Fe-S] cluster scaffold protein carrying a second [4Fe-4S](2+) cluster] + N(6)-octanoyl-L-lysyl-[protein] + 2 oxidized [2Fe-2S]-[ferredoxin] + 2 S-adenosyl-L-methionine + 4 H(+) = [[Fe-S] cluster scaffold protein] + N(6)-[(R)-dihydrolipoyl]-L-lysyl-[protein] + 4 Fe(3+) + 2 hydrogen sulfide + 2 5'-deoxyadenosine + 2 L-methionine + 2 reduced [2Fe-2S]-[ferredoxin]</text>
        <dbReference type="Rhea" id="RHEA:16585"/>
        <dbReference type="Rhea" id="RHEA-COMP:9928"/>
        <dbReference type="Rhea" id="RHEA-COMP:10000"/>
        <dbReference type="Rhea" id="RHEA-COMP:10001"/>
        <dbReference type="Rhea" id="RHEA-COMP:10475"/>
        <dbReference type="Rhea" id="RHEA-COMP:14568"/>
        <dbReference type="Rhea" id="RHEA-COMP:14569"/>
        <dbReference type="ChEBI" id="CHEBI:15378"/>
        <dbReference type="ChEBI" id="CHEBI:17319"/>
        <dbReference type="ChEBI" id="CHEBI:29034"/>
        <dbReference type="ChEBI" id="CHEBI:29919"/>
        <dbReference type="ChEBI" id="CHEBI:33722"/>
        <dbReference type="ChEBI" id="CHEBI:33737"/>
        <dbReference type="ChEBI" id="CHEBI:33738"/>
        <dbReference type="ChEBI" id="CHEBI:57844"/>
        <dbReference type="ChEBI" id="CHEBI:59789"/>
        <dbReference type="ChEBI" id="CHEBI:78809"/>
        <dbReference type="ChEBI" id="CHEBI:83100"/>
        <dbReference type="EC" id="2.8.1.8"/>
    </reaction>
</comment>
<comment type="cofactor">
    <cofactor evidence="1">
        <name>[4Fe-4S] cluster</name>
        <dbReference type="ChEBI" id="CHEBI:49883"/>
    </cofactor>
    <text evidence="1">Binds 2 [4Fe-4S] clusters per subunit. One cluster is coordinated with 3 cysteines and an exchangeable S-adenosyl-L-methionine.</text>
</comment>
<comment type="pathway">
    <text evidence="1">Protein modification; protein lipoylation via endogenous pathway; protein N(6)-(lipoyl)lysine from octanoyl-[acyl-carrier-protein]: step 2/2.</text>
</comment>
<comment type="subcellular location">
    <subcellularLocation>
        <location evidence="1">Mitochondrion</location>
    </subcellularLocation>
</comment>
<comment type="miscellaneous">
    <text evidence="1">This protein may be expected to contain an N-terminal transit peptide but none has been predicted.</text>
</comment>
<comment type="similarity">
    <text evidence="1">Belongs to the radical SAM superfamily. Lipoyl synthase family.</text>
</comment>